<organism>
    <name type="scientific">Rattus norvegicus</name>
    <name type="common">Rat</name>
    <dbReference type="NCBI Taxonomy" id="10116"/>
    <lineage>
        <taxon>Eukaryota</taxon>
        <taxon>Metazoa</taxon>
        <taxon>Chordata</taxon>
        <taxon>Craniata</taxon>
        <taxon>Vertebrata</taxon>
        <taxon>Euteleostomi</taxon>
        <taxon>Mammalia</taxon>
        <taxon>Eutheria</taxon>
        <taxon>Euarchontoglires</taxon>
        <taxon>Glires</taxon>
        <taxon>Rodentia</taxon>
        <taxon>Myomorpha</taxon>
        <taxon>Muroidea</taxon>
        <taxon>Muridae</taxon>
        <taxon>Murinae</taxon>
        <taxon>Rattus</taxon>
    </lineage>
</organism>
<name>S45A1_RAT</name>
<gene>
    <name evidence="6" type="primary">Slc45a1</name>
    <name type="synonym">Dnb5</name>
</gene>
<feature type="chain" id="PRO_0000122516" description="Proton-associated sugar transporter A">
    <location>
        <begin position="1"/>
        <end position="751"/>
    </location>
</feature>
<feature type="transmembrane region" description="Helical" evidence="2">
    <location>
        <begin position="93"/>
        <end position="113"/>
    </location>
</feature>
<feature type="transmembrane region" description="Helical" evidence="2">
    <location>
        <begin position="123"/>
        <end position="143"/>
    </location>
</feature>
<feature type="transmembrane region" description="Helical" evidence="2">
    <location>
        <begin position="155"/>
        <end position="175"/>
    </location>
</feature>
<feature type="transmembrane region" description="Helical" evidence="2">
    <location>
        <begin position="191"/>
        <end position="211"/>
    </location>
</feature>
<feature type="transmembrane region" description="Helical" evidence="2">
    <location>
        <begin position="233"/>
        <end position="253"/>
    </location>
</feature>
<feature type="transmembrane region" description="Helical" evidence="2">
    <location>
        <begin position="268"/>
        <end position="288"/>
    </location>
</feature>
<feature type="transmembrane region" description="Helical" evidence="2">
    <location>
        <begin position="536"/>
        <end position="556"/>
    </location>
</feature>
<feature type="transmembrane region" description="Helical" evidence="2">
    <location>
        <begin position="576"/>
        <end position="596"/>
    </location>
</feature>
<feature type="transmembrane region" description="Helical" evidence="2">
    <location>
        <begin position="606"/>
        <end position="626"/>
    </location>
</feature>
<feature type="transmembrane region" description="Helical" evidence="2">
    <location>
        <begin position="630"/>
        <end position="650"/>
    </location>
</feature>
<feature type="transmembrane region" description="Helical" evidence="2">
    <location>
        <begin position="688"/>
        <end position="708"/>
    </location>
</feature>
<feature type="transmembrane region" description="Helical" evidence="2">
    <location>
        <begin position="710"/>
        <end position="730"/>
    </location>
</feature>
<feature type="modified residue" description="Phosphothreonine" evidence="1">
    <location>
        <position position="500"/>
    </location>
</feature>
<dbReference type="EMBL" id="AB075229">
    <property type="protein sequence ID" value="BAB97313.1"/>
    <property type="molecule type" value="mRNA"/>
</dbReference>
<dbReference type="SMR" id="Q8K4S3"/>
<dbReference type="FunCoup" id="Q8K4S3">
    <property type="interactions" value="540"/>
</dbReference>
<dbReference type="STRING" id="10116.ENSRNOP00000024581"/>
<dbReference type="TCDB" id="2.A.2.4.4">
    <property type="family name" value="the glycoside-pentoside-hexuronide (gph):cation symporter family"/>
</dbReference>
<dbReference type="GlyGen" id="Q8K4S3">
    <property type="glycosylation" value="2 sites"/>
</dbReference>
<dbReference type="PhosphoSitePlus" id="Q8K4S3"/>
<dbReference type="PaxDb" id="10116-ENSRNOP00000024581"/>
<dbReference type="UCSC" id="RGD:708502">
    <property type="organism name" value="rat"/>
</dbReference>
<dbReference type="AGR" id="RGD:708502"/>
<dbReference type="RGD" id="708502">
    <property type="gene designation" value="Slc45a1"/>
</dbReference>
<dbReference type="eggNOG" id="KOG0637">
    <property type="taxonomic scope" value="Eukaryota"/>
</dbReference>
<dbReference type="InParanoid" id="Q8K4S3"/>
<dbReference type="PhylomeDB" id="Q8K4S3"/>
<dbReference type="PRO" id="PR:Q8K4S3"/>
<dbReference type="Proteomes" id="UP000002494">
    <property type="component" value="Unplaced"/>
</dbReference>
<dbReference type="GO" id="GO:0016020">
    <property type="term" value="C:membrane"/>
    <property type="evidence" value="ECO:0000318"/>
    <property type="project" value="GO_Central"/>
</dbReference>
<dbReference type="GO" id="GO:0005356">
    <property type="term" value="F:D-glucose:proton symporter activity"/>
    <property type="evidence" value="ECO:0000314"/>
    <property type="project" value="UniProtKB"/>
</dbReference>
<dbReference type="GO" id="GO:0015517">
    <property type="term" value="F:galactose:proton symporter activity"/>
    <property type="evidence" value="ECO:0000314"/>
    <property type="project" value="UniProtKB"/>
</dbReference>
<dbReference type="GO" id="GO:0008506">
    <property type="term" value="F:sucrose:proton symporter activity"/>
    <property type="evidence" value="ECO:0000318"/>
    <property type="project" value="GO_Central"/>
</dbReference>
<dbReference type="GO" id="GO:1904659">
    <property type="term" value="P:D-glucose transmembrane transport"/>
    <property type="evidence" value="ECO:0000315"/>
    <property type="project" value="UniProtKB"/>
</dbReference>
<dbReference type="GO" id="GO:0015757">
    <property type="term" value="P:galactose transmembrane transport"/>
    <property type="evidence" value="ECO:0000314"/>
    <property type="project" value="UniProtKB"/>
</dbReference>
<dbReference type="CDD" id="cd17313">
    <property type="entry name" value="MFS_SLC45_SUC"/>
    <property type="match status" value="1"/>
</dbReference>
<dbReference type="FunFam" id="1.20.1250.20:FF:000069">
    <property type="entry name" value="Solute carrier family 45 member 4"/>
    <property type="match status" value="1"/>
</dbReference>
<dbReference type="FunFam" id="1.20.1250.20:FF:000120">
    <property type="entry name" value="Solute carrier family 45, member 1"/>
    <property type="match status" value="1"/>
</dbReference>
<dbReference type="Gene3D" id="1.20.1250.20">
    <property type="entry name" value="MFS general substrate transporter like domains"/>
    <property type="match status" value="2"/>
</dbReference>
<dbReference type="InterPro" id="IPR011701">
    <property type="entry name" value="MFS"/>
</dbReference>
<dbReference type="InterPro" id="IPR036259">
    <property type="entry name" value="MFS_trans_sf"/>
</dbReference>
<dbReference type="PANTHER" id="PTHR19432:SF6">
    <property type="entry name" value="PROTON-ASSOCIATED SUGAR TRANSPORTER A"/>
    <property type="match status" value="1"/>
</dbReference>
<dbReference type="PANTHER" id="PTHR19432">
    <property type="entry name" value="SUGAR TRANSPORTER"/>
    <property type="match status" value="1"/>
</dbReference>
<dbReference type="Pfam" id="PF07690">
    <property type="entry name" value="MFS_1"/>
    <property type="match status" value="1"/>
</dbReference>
<dbReference type="SUPFAM" id="SSF103473">
    <property type="entry name" value="MFS general substrate transporter"/>
    <property type="match status" value="1"/>
</dbReference>
<comment type="function">
    <text evidence="3">Proton-associated glucose transporter in the brain.</text>
</comment>
<comment type="catalytic activity">
    <reaction evidence="3">
        <text>D-galactose(in) + H(+)(in) = D-galactose(out) + H(+)(out)</text>
        <dbReference type="Rhea" id="RHEA:29019"/>
        <dbReference type="ChEBI" id="CHEBI:4139"/>
        <dbReference type="ChEBI" id="CHEBI:15378"/>
    </reaction>
</comment>
<comment type="catalytic activity">
    <reaction evidence="3">
        <text>D-glucose(out) + H(+)(out) = D-glucose(in) + H(+)(in)</text>
        <dbReference type="Rhea" id="RHEA:69556"/>
        <dbReference type="ChEBI" id="CHEBI:4167"/>
        <dbReference type="ChEBI" id="CHEBI:15378"/>
    </reaction>
</comment>
<comment type="biophysicochemical properties">
    <phDependence>
        <text evidence="3">Optimum pH is 6.5.</text>
    </phDependence>
</comment>
<comment type="subcellular location">
    <subcellularLocation>
        <location evidence="3">Membrane</location>
        <topology evidence="2">Multi-pass membrane protein</topology>
    </subcellularLocation>
</comment>
<comment type="tissue specificity">
    <text evidence="3">Predominantly expressed in brain.</text>
</comment>
<comment type="similarity">
    <text evidence="5">Belongs to the glycoside-pentoside-hexuronide (GPH) cation symporter transporter (TC 2.A.2) family.</text>
</comment>
<sequence length="751" mass="81752">MIPPAGSTPPGEALIPSVAPQDFWRSPISGYSGSVTRHISHRANNFKRHPKRRKYIRPSPPPPPNTPCPIELVDFEDLHPQRSFWELLFNGCILFGIEFSYAMETAYVTPVLLQMGLPDQLYSLVWFISPILGFLLQPLLGAWSDRCTSRFGRRRPFILVLAIGALLGLSLLLNGRDIGMALADTATNHKWGILLTVCGVVLMDFSADSADNPSHAYMMDVCGPVDQDRGLNIHALMAGLGGGFGYVVGGIHWDKTSFGRALGGQLRVIYIFTAITLSVTTVFTLVSIPERPLRPLGEKRTAMKSPSLPLPPSPPVLLEEGAGDTLPSTTATSLYASFSSPISPPSPLTPKYGSFISRDSSLTGINEFASSFGTSNIDSVLIDCFTAGHDNYLALPSSVPRQAISVSFPRAPDGFYCQERGLERREGPLTLGLDGDVLRVGSLDTSKPRASGILKRPQTLALPDVAGGNGPETSRRRNVTFSQQVANILLNGVKYESELTGSSEQSEQPLSLRRLCSTIYNMPRPVRNLCVNHFLGWLSFEGMLLFYTDFMGEVVFQGDPKAPHASEAYQKYNSGVTMGCWGMCIYAFSAAFYSAILEKLEECLSVRTLYFIAYLLFGLGTGLATLSRNLYVVLSLCTHYGILFSTLCTLPYSLLCDYYQSKKFAGSSADGTRRGMGVDISLLSCQYFLAQILVSLVLGPLTSAVGSANGVMYFASLVSFLGCLYSSLCVTYEIPSADAADEERQPLLLNV</sequence>
<evidence type="ECO:0000250" key="1">
    <source>
        <dbReference type="UniProtKB" id="Q8BIV7"/>
    </source>
</evidence>
<evidence type="ECO:0000255" key="2"/>
<evidence type="ECO:0000269" key="3">
    <source>
    </source>
</evidence>
<evidence type="ECO:0000303" key="4">
    <source>
    </source>
</evidence>
<evidence type="ECO:0000305" key="5"/>
<evidence type="ECO:0000312" key="6">
    <source>
        <dbReference type="RGD" id="708502"/>
    </source>
</evidence>
<reference key="1">
    <citation type="journal article" date="2002" name="J. Neurosci.">
        <title>Past-A, a novel proton-associated sugar transporter, regulates glucose homeostasis in the brain.</title>
        <authorList>
            <person name="Shimokawa N."/>
            <person name="Okada J."/>
            <person name="Haglund K."/>
            <person name="Dikic I."/>
            <person name="Koibuchi N."/>
            <person name="Miura M."/>
        </authorList>
    </citation>
    <scope>NUCLEOTIDE SEQUENCE [MRNA]</scope>
    <scope>FUNCTION</scope>
    <scope>TISSUE SPECIFICITY</scope>
    <scope>TRANSPORTER ACTIVITY</scope>
    <scope>BIOPHYSICOCHEMICAL PROPERTIES</scope>
    <scope>SUBCELLULAR LOCATION</scope>
    <source>
        <tissue>Brain</tissue>
    </source>
</reference>
<proteinExistence type="evidence at protein level"/>
<protein>
    <recommendedName>
        <fullName evidence="4">Proton-associated sugar transporter A</fullName>
        <shortName evidence="4">PAST-A</shortName>
    </recommendedName>
    <alternativeName>
        <fullName>Solute carrier family 45 member 1</fullName>
    </alternativeName>
</protein>
<accession>Q8K4S3</accession>
<keyword id="KW-0472">Membrane</keyword>
<keyword id="KW-0597">Phosphoprotein</keyword>
<keyword id="KW-1185">Reference proteome</keyword>
<keyword id="KW-0762">Sugar transport</keyword>
<keyword id="KW-0769">Symport</keyword>
<keyword id="KW-0812">Transmembrane</keyword>
<keyword id="KW-1133">Transmembrane helix</keyword>
<keyword id="KW-0813">Transport</keyword>